<protein>
    <recommendedName>
        <fullName>Histone H2A.Z</fullName>
        <shortName>H2A/z</shortName>
    </recommendedName>
</protein>
<keyword id="KW-0007">Acetylation</keyword>
<keyword id="KW-0158">Chromosome</keyword>
<keyword id="KW-0238">DNA-binding</keyword>
<keyword id="KW-1017">Isopeptide bond</keyword>
<keyword id="KW-0488">Methylation</keyword>
<keyword id="KW-0544">Nucleosome core</keyword>
<keyword id="KW-0539">Nucleus</keyword>
<keyword id="KW-1185">Reference proteome</keyword>
<keyword id="KW-0832">Ubl conjugation</keyword>
<comment type="function">
    <text evidence="3 4">Variant histone H2A which replaces conventional H2A in a subset of nucleosomes. Nucleosomes wrap and compact DNA into chromatin, limiting DNA accessibility to the cellular machineries which require DNA as a template. Histones thereby play a central role in transcription regulation, DNA repair, DNA replication and chromosomal stability. DNA accessibility is regulated via a complex set of post-translational modifications of histones, also called histone code, and nucleosome remodeling. May be involved in the formation of constitutive heterochromatin. May be required for chromosome segregation during cell division (By similarity).</text>
</comment>
<comment type="subunit">
    <text evidence="3 4">The nucleosome is a histone octamer containing two molecules each of H2A, H2B, H3 and H4 assembled in one H3-H4 heterotetramer and two H2A-H2B heterodimers. The octamer wraps approximately 147 bp of DNA. H2A or its variant H2AZ1 forms a heterodimer with H2B. H2AZ1 interacts with INCENP. Interacts (via M6 cassette) with ANP32E; leading to removal of H2A.Z/H2AZ1 from the nucleosome. Interacts with VPS72 (via N-terminal domain); the interaction is enhanced by VPS72 phosphorylation which is promoted by ZNHIT1. Interacts with PWWP2A. Interacts with FH (when phosphorylated by PRKDC). Interacts with ZNHIT1; the interaction results in recruitment of H2AZ1 to the MYOG promoter region which is required for muscle-specific gene expression (By similarity).</text>
</comment>
<comment type="subcellular location">
    <subcellularLocation>
        <location>Nucleus</location>
    </subcellularLocation>
    <subcellularLocation>
        <location>Chromosome</location>
    </subcellularLocation>
</comment>
<comment type="PTM">
    <text evidence="3">Monoubiquitination of Lys-122 gives a specific tag for epigenetic transcriptional repression.</text>
</comment>
<comment type="PTM">
    <text evidence="3 4">Acetylated on Lys-5, Lys-8, Lys-12 and Lys-14 by KAT2A; KAT2A is recruited by the XPC complex in absence of DNA damage (By similarity). Acetylated on Lys-5, Lys-8 and Lys-12 during interphase; acetylation disappears at mitosis (By similarity). Acetylation by the NuA4 histone acetyltransferase complex is required for hematopoietic stem cell maintenance (By similarity).</text>
</comment>
<comment type="PTM">
    <text evidence="2">Not phosphorylated.</text>
</comment>
<comment type="PTM">
    <text evidence="3">Monomethylated on Lys-5 and Lys-8 by SETD6. SETD6 predominantly methylates Lys-8, lys-5 being a possible secondary site.</text>
</comment>
<comment type="PTM">
    <text evidence="3">Lactylated in macrophages by EP300/P300 by using lactoyl-CoA directly derived from endogenous or exogenous lactate, leading to stimulates gene transcription.</text>
</comment>
<comment type="similarity">
    <text evidence="6">Belongs to the histone H2A family.</text>
</comment>
<gene>
    <name evidence="7" type="primary">H2az1</name>
    <name type="synonym">H2afz</name>
    <name type="synonym">H2az</name>
</gene>
<evidence type="ECO:0000250" key="1"/>
<evidence type="ECO:0000250" key="2">
    <source>
        <dbReference type="UniProtKB" id="P0C0S4"/>
    </source>
</evidence>
<evidence type="ECO:0000250" key="3">
    <source>
        <dbReference type="UniProtKB" id="P0C0S5"/>
    </source>
</evidence>
<evidence type="ECO:0000250" key="4">
    <source>
        <dbReference type="UniProtKB" id="P0C0S6"/>
    </source>
</evidence>
<evidence type="ECO:0000256" key="5">
    <source>
        <dbReference type="SAM" id="MobiDB-lite"/>
    </source>
</evidence>
<evidence type="ECO:0000305" key="6"/>
<evidence type="ECO:0000312" key="7">
    <source>
        <dbReference type="RGD" id="621464"/>
    </source>
</evidence>
<sequence>MAGGKAGKDSGKAKTKAVSRSQRAGLQFPVGRIHRHLKSRTTSHGRVGATAAVYSAAILEYLTAEVLELAGNASKDLKVKRITPRHLQLAIRGDEELDSLIKATIAGGGVIPHIHKSLIGKKGQQKTV</sequence>
<organism>
    <name type="scientific">Rattus norvegicus</name>
    <name type="common">Rat</name>
    <dbReference type="NCBI Taxonomy" id="10116"/>
    <lineage>
        <taxon>Eukaryota</taxon>
        <taxon>Metazoa</taxon>
        <taxon>Chordata</taxon>
        <taxon>Craniata</taxon>
        <taxon>Vertebrata</taxon>
        <taxon>Euteleostomi</taxon>
        <taxon>Mammalia</taxon>
        <taxon>Eutheria</taxon>
        <taxon>Euarchontoglires</taxon>
        <taxon>Glires</taxon>
        <taxon>Rodentia</taxon>
        <taxon>Myomorpha</taxon>
        <taxon>Muroidea</taxon>
        <taxon>Muridae</taxon>
        <taxon>Murinae</taxon>
        <taxon>Rattus</taxon>
    </lineage>
</organism>
<reference key="1">
    <citation type="journal article" date="1988" name="Nucleic Acids Res.">
        <title>Sequence of cDNAs for mammalian H2A.Z, an evolutionarily diverged but highly conserved basal histone H2A isoprotein species.</title>
        <authorList>
            <person name="Hatch C.L."/>
            <person name="Bonner W.M."/>
        </authorList>
    </citation>
    <scope>NUCLEOTIDE SEQUENCE [MRNA]</scope>
    <source>
        <tissue>Brain</tissue>
    </source>
</reference>
<reference key="2">
    <citation type="journal article" date="2004" name="Genome Res.">
        <title>The status, quality, and expansion of the NIH full-length cDNA project: the Mammalian Gene Collection (MGC).</title>
        <authorList>
            <consortium name="The MGC Project Team"/>
        </authorList>
    </citation>
    <scope>NUCLEOTIDE SEQUENCE [LARGE SCALE MRNA]</scope>
    <source>
        <tissue>Pituitary</tissue>
    </source>
</reference>
<reference key="3">
    <citation type="journal article" date="2009" name="Proteomics">
        <title>Mass spectrometry-compatible silver staining of histones resolved on acetic acid-urea-Triton PAGE.</title>
        <authorList>
            <person name="Pramod K.S."/>
            <person name="Bharat K."/>
            <person name="Sanjay G."/>
        </authorList>
    </citation>
    <scope>IDENTIFICATION BY MASS SPECTROMETRY</scope>
</reference>
<feature type="initiator methionine" description="Removed" evidence="6">
    <location>
        <position position="1"/>
    </location>
</feature>
<feature type="chain" id="PRO_0000055300" description="Histone H2A.Z">
    <location>
        <begin position="2"/>
        <end position="128"/>
    </location>
</feature>
<feature type="region of interest" description="Disordered" evidence="5">
    <location>
        <begin position="1"/>
        <end position="25"/>
    </location>
</feature>
<feature type="region of interest" description="Required for interaction with INCENP" evidence="1">
    <location>
        <begin position="1"/>
        <end position="17"/>
    </location>
</feature>
<feature type="region of interest" description="M6 cassette" evidence="1">
    <location>
        <begin position="89"/>
        <end position="100"/>
    </location>
</feature>
<feature type="region of interest" description="Required for interaction with INCENP" evidence="1">
    <location>
        <begin position="93"/>
        <end position="103"/>
    </location>
</feature>
<feature type="region of interest" description="Required for interaction with PWWP2A" evidence="3">
    <location>
        <begin position="120"/>
        <end position="128"/>
    </location>
</feature>
<feature type="compositionally biased region" description="Basic and acidic residues" evidence="5">
    <location>
        <begin position="1"/>
        <end position="12"/>
    </location>
</feature>
<feature type="modified residue" description="N6-acetyllysine; alternate" evidence="3">
    <location>
        <position position="5"/>
    </location>
</feature>
<feature type="modified residue" description="N6-methyllysine; alternate" evidence="3">
    <location>
        <position position="5"/>
    </location>
</feature>
<feature type="modified residue" description="N6-acetyllysine; alternate" evidence="3">
    <location>
        <position position="8"/>
    </location>
</feature>
<feature type="modified residue" description="N6-methyllysine; alternate" evidence="3">
    <location>
        <position position="8"/>
    </location>
</feature>
<feature type="modified residue" description="N6-acetyllysine; alternate" evidence="3">
    <location>
        <position position="12"/>
    </location>
</feature>
<feature type="modified residue" description="N6-lactoyllysine; alternate" evidence="3">
    <location>
        <position position="12"/>
    </location>
</feature>
<feature type="modified residue" description="N6-acetyllysine; alternate" evidence="3">
    <location>
        <position position="14"/>
    </location>
</feature>
<feature type="modified residue" description="N6-lactoyllysine; alternate" evidence="3">
    <location>
        <position position="14"/>
    </location>
</feature>
<feature type="modified residue" description="N6-lactoyllysine" evidence="3">
    <location>
        <position position="116"/>
    </location>
</feature>
<feature type="cross-link" description="Glycyl lysine isopeptide (Lys-Gly) (interchain with G-Cter in ubiquitin)" evidence="3">
    <location>
        <position position="122"/>
    </location>
</feature>
<proteinExistence type="evidence at protein level"/>
<name>H2AZ_RAT</name>
<dbReference type="EMBL" id="X52316">
    <property type="protein sequence ID" value="CAA36552.1"/>
    <property type="molecule type" value="mRNA"/>
</dbReference>
<dbReference type="EMBL" id="M37584">
    <property type="protein sequence ID" value="AAA41329.1"/>
    <property type="molecule type" value="mRNA"/>
</dbReference>
<dbReference type="EMBL" id="BC060564">
    <property type="protein sequence ID" value="AAH60564.1"/>
    <property type="molecule type" value="mRNA"/>
</dbReference>
<dbReference type="EMBL" id="BC086348">
    <property type="protein sequence ID" value="AAH86348.1"/>
    <property type="molecule type" value="mRNA"/>
</dbReference>
<dbReference type="PIR" id="S03644">
    <property type="entry name" value="S03644"/>
</dbReference>
<dbReference type="RefSeq" id="NP_073165.1">
    <property type="nucleotide sequence ID" value="NM_022674.2"/>
</dbReference>
<dbReference type="RefSeq" id="XP_063138496.1">
    <property type="nucleotide sequence ID" value="XM_063282426.1"/>
</dbReference>
<dbReference type="SMR" id="P0C0S7"/>
<dbReference type="BioGRID" id="248676">
    <property type="interactions" value="2"/>
</dbReference>
<dbReference type="FunCoup" id="P0C0S7">
    <property type="interactions" value="3234"/>
</dbReference>
<dbReference type="IntAct" id="P0C0S7">
    <property type="interactions" value="1"/>
</dbReference>
<dbReference type="MINT" id="P0C0S7"/>
<dbReference type="STRING" id="10116.ENSRNOP00000013919"/>
<dbReference type="iPTMnet" id="P0C0S7"/>
<dbReference type="PhosphoSitePlus" id="P0C0S7"/>
<dbReference type="jPOST" id="P0C0S7"/>
<dbReference type="PaxDb" id="10116-ENSRNOP00000013919"/>
<dbReference type="ABCD" id="P0C0S7">
    <property type="antibodies" value="1 sequenced antibody"/>
</dbReference>
<dbReference type="Ensembl" id="ENSRNOT00000013919.7">
    <property type="protein sequence ID" value="ENSRNOP00000013919.7"/>
    <property type="gene ID" value="ENSRNOG00000010306.7"/>
</dbReference>
<dbReference type="GeneID" id="58940"/>
<dbReference type="KEGG" id="rno:58940"/>
<dbReference type="AGR" id="RGD:621464"/>
<dbReference type="CTD" id="3015"/>
<dbReference type="RGD" id="621464">
    <property type="gene designation" value="H2az1"/>
</dbReference>
<dbReference type="eggNOG" id="KOG1757">
    <property type="taxonomic scope" value="Eukaryota"/>
</dbReference>
<dbReference type="GeneTree" id="ENSGT00900000140979"/>
<dbReference type="InParanoid" id="P0C0S7"/>
<dbReference type="OMA" id="PVGRIHT"/>
<dbReference type="OrthoDB" id="62569at9989"/>
<dbReference type="PhylomeDB" id="P0C0S7"/>
<dbReference type="TreeFam" id="TF354232"/>
<dbReference type="PRO" id="PR:P0C0S7"/>
<dbReference type="Proteomes" id="UP000002494">
    <property type="component" value="Chromosome 2"/>
</dbReference>
<dbReference type="GO" id="GO:0000791">
    <property type="term" value="C:euchromatin"/>
    <property type="evidence" value="ECO:0000266"/>
    <property type="project" value="RGD"/>
</dbReference>
<dbReference type="GO" id="GO:0000792">
    <property type="term" value="C:heterochromatin"/>
    <property type="evidence" value="ECO:0000266"/>
    <property type="project" value="RGD"/>
</dbReference>
<dbReference type="GO" id="GO:0000786">
    <property type="term" value="C:nucleosome"/>
    <property type="evidence" value="ECO:0000266"/>
    <property type="project" value="RGD"/>
</dbReference>
<dbReference type="GO" id="GO:0005634">
    <property type="term" value="C:nucleus"/>
    <property type="evidence" value="ECO:0000266"/>
    <property type="project" value="RGD"/>
</dbReference>
<dbReference type="GO" id="GO:0031490">
    <property type="term" value="F:chromatin DNA binding"/>
    <property type="evidence" value="ECO:0000266"/>
    <property type="project" value="RGD"/>
</dbReference>
<dbReference type="GO" id="GO:0031492">
    <property type="term" value="F:nucleosomal DNA binding"/>
    <property type="evidence" value="ECO:0000266"/>
    <property type="project" value="RGD"/>
</dbReference>
<dbReference type="GO" id="GO:0046982">
    <property type="term" value="F:protein heterodimerization activity"/>
    <property type="evidence" value="ECO:0007669"/>
    <property type="project" value="InterPro"/>
</dbReference>
<dbReference type="GO" id="GO:0000978">
    <property type="term" value="F:RNA polymerase II cis-regulatory region sequence-specific DNA binding"/>
    <property type="evidence" value="ECO:0000266"/>
    <property type="project" value="RGD"/>
</dbReference>
<dbReference type="GO" id="GO:0000979">
    <property type="term" value="F:RNA polymerase II core promoter sequence-specific DNA binding"/>
    <property type="evidence" value="ECO:0000266"/>
    <property type="project" value="RGD"/>
</dbReference>
<dbReference type="GO" id="GO:0030527">
    <property type="term" value="F:structural constituent of chromatin"/>
    <property type="evidence" value="ECO:0000318"/>
    <property type="project" value="GO_Central"/>
</dbReference>
<dbReference type="GO" id="GO:0071392">
    <property type="term" value="P:cellular response to estradiol stimulus"/>
    <property type="evidence" value="ECO:0000266"/>
    <property type="project" value="RGD"/>
</dbReference>
<dbReference type="GO" id="GO:0032869">
    <property type="term" value="P:cellular response to insulin stimulus"/>
    <property type="evidence" value="ECO:0000314"/>
    <property type="project" value="RGD"/>
</dbReference>
<dbReference type="GO" id="GO:0031507">
    <property type="term" value="P:heterochromatin formation"/>
    <property type="evidence" value="ECO:0000318"/>
    <property type="project" value="GO_Central"/>
</dbReference>
<dbReference type="GO" id="GO:0045944">
    <property type="term" value="P:positive regulation of transcription by RNA polymerase II"/>
    <property type="evidence" value="ECO:0000266"/>
    <property type="project" value="RGD"/>
</dbReference>
<dbReference type="CDD" id="cd00074">
    <property type="entry name" value="HFD_H2A"/>
    <property type="match status" value="1"/>
</dbReference>
<dbReference type="FunFam" id="1.10.20.10:FF:000005">
    <property type="entry name" value="Histone H2A"/>
    <property type="match status" value="1"/>
</dbReference>
<dbReference type="Gene3D" id="1.10.20.10">
    <property type="entry name" value="Histone, subunit A"/>
    <property type="match status" value="1"/>
</dbReference>
<dbReference type="InterPro" id="IPR009072">
    <property type="entry name" value="Histone-fold"/>
</dbReference>
<dbReference type="InterPro" id="IPR002119">
    <property type="entry name" value="Histone_H2A"/>
</dbReference>
<dbReference type="InterPro" id="IPR007125">
    <property type="entry name" value="Histone_H2A/H2B/H3"/>
</dbReference>
<dbReference type="InterPro" id="IPR032454">
    <property type="entry name" value="Histone_H2A_C"/>
</dbReference>
<dbReference type="InterPro" id="IPR032458">
    <property type="entry name" value="Histone_H2A_CS"/>
</dbReference>
<dbReference type="PANTHER" id="PTHR23430">
    <property type="entry name" value="HISTONE H2A"/>
    <property type="match status" value="1"/>
</dbReference>
<dbReference type="Pfam" id="PF00125">
    <property type="entry name" value="Histone"/>
    <property type="match status" value="1"/>
</dbReference>
<dbReference type="Pfam" id="PF16211">
    <property type="entry name" value="Histone_H2A_C"/>
    <property type="match status" value="1"/>
</dbReference>
<dbReference type="PRINTS" id="PR00620">
    <property type="entry name" value="HISTONEH2A"/>
</dbReference>
<dbReference type="SMART" id="SM00414">
    <property type="entry name" value="H2A"/>
    <property type="match status" value="1"/>
</dbReference>
<dbReference type="SUPFAM" id="SSF47113">
    <property type="entry name" value="Histone-fold"/>
    <property type="match status" value="1"/>
</dbReference>
<dbReference type="PROSITE" id="PS00046">
    <property type="entry name" value="HISTONE_H2A"/>
    <property type="match status" value="1"/>
</dbReference>
<accession>P0C0S7</accession>
<accession>P17317</accession>
<accession>Q5U5H6</accession>